<evidence type="ECO:0000250" key="1"/>
<evidence type="ECO:0000269" key="2">
    <source>
    </source>
</evidence>
<evidence type="ECO:0000269" key="3">
    <source>
    </source>
</evidence>
<evidence type="ECO:0000305" key="4"/>
<reference key="1">
    <citation type="journal article" date="1976" name="J. Antibiot.">
        <title>Isolation of three new antibiotics, thiocillins I, II and III, related to micrococcin P. Studies on antibiotics from the genus Bacillus. VIII.</title>
        <authorList>
            <person name="Shoji J."/>
            <person name="Hinoo H."/>
            <person name="Wakisaka Y."/>
            <person name="Koizumi K."/>
            <person name="Mayama M."/>
        </authorList>
    </citation>
    <scope>CHARACTERIZATION</scope>
    <scope>SUBCELLULAR LOCATION</scope>
    <source>
        <strain>AR-91</strain>
    </source>
</reference>
<reference key="2">
    <citation type="journal article" date="1981" name="J. Antibiot.">
        <title>Structural studies on thiocillins I, II and III (studies on antibiotics from the genus Bacillus XXIX).</title>
        <authorList>
            <person name="Shoji J."/>
            <person name="Kato T."/>
            <person name="Yoshimura Y."/>
            <person name="Tori K."/>
        </authorList>
    </citation>
    <scope>STRUCTURE BY NMR</scope>
    <scope>DEHYDRATION AT THR-4 AND THR-13</scope>
    <scope>METHYLATION AT THR-8</scope>
    <scope>HYDROXYLATION AT VAL-6</scope>
    <source>
        <strain>AR-91</strain>
    </source>
</reference>
<keyword id="KW-0044">Antibiotic</keyword>
<keyword id="KW-0929">Antimicrobial</keyword>
<keyword id="KW-0078">Bacteriocin</keyword>
<keyword id="KW-0379">Hydroxylation</keyword>
<keyword id="KW-0488">Methylation</keyword>
<keyword id="KW-0964">Secreted</keyword>
<keyword id="KW-0883">Thioether bond</keyword>
<dbReference type="iPTMnet" id="P0C8P7"/>
<dbReference type="GO" id="GO:0005576">
    <property type="term" value="C:extracellular region"/>
    <property type="evidence" value="ECO:0007669"/>
    <property type="project" value="UniProtKB-SubCell"/>
</dbReference>
<dbReference type="GO" id="GO:0042742">
    <property type="term" value="P:defense response to bacterium"/>
    <property type="evidence" value="ECO:0007669"/>
    <property type="project" value="UniProtKB-KW"/>
</dbReference>
<dbReference type="GO" id="GO:0031640">
    <property type="term" value="P:killing of cells of another organism"/>
    <property type="evidence" value="ECO:0007669"/>
    <property type="project" value="UniProtKB-KW"/>
</dbReference>
<sequence>SCTTCVCTCSCCTT</sequence>
<feature type="peptide" id="PRO_0000363168" description="Thiocillin">
    <location>
        <begin position="1"/>
        <end position="14"/>
    </location>
</feature>
<feature type="site" description="Not hydroxylated; in form thiocillin III">
    <location>
        <position position="6"/>
    </location>
</feature>
<feature type="modified residue" description="(Z)-2,3-didehydrobutyrine" evidence="2">
    <location>
        <position position="4"/>
    </location>
</feature>
<feature type="modified residue" description="3-hydroxyvaline (Val); in form thiocillin II" evidence="2">
    <location>
        <position position="6"/>
    </location>
</feature>
<feature type="modified residue" description="O-methylthreonine; in form thiocillin II and form thiocillin III" evidence="2">
    <location>
        <position position="8"/>
    </location>
</feature>
<feature type="modified residue" description="(Z)-2,3-didehydrobutyrine" evidence="2">
    <location>
        <position position="13"/>
    </location>
</feature>
<feature type="modified residue" description="Decarboxylated threonine" evidence="1">
    <location>
        <position position="14"/>
    </location>
</feature>
<feature type="cross-link" description="Pyridine-2,5-dicarboxylic acid (Ser-Ser) (with C-9)">
    <location>
        <begin position="1"/>
        <end position="10"/>
    </location>
</feature>
<feature type="cross-link" description="Pyridine-2,5-dicarboxylic acid (Ser-Cys) (with S-10)">
    <location>
        <begin position="1"/>
        <end position="9"/>
    </location>
</feature>
<feature type="cross-link" description="Thiazole-4-carboxylic acid (Ser-Cys)">
    <location>
        <begin position="1"/>
        <end position="2"/>
    </location>
</feature>
<feature type="cross-link" description="Thiazole-4-carboxylic acid (Thr-Cys)">
    <location>
        <begin position="4"/>
        <end position="5"/>
    </location>
</feature>
<feature type="cross-link" description="Thiazole-4-carboxylic acid (Val-Cys)">
    <location>
        <begin position="6"/>
        <end position="7"/>
    </location>
</feature>
<feature type="cross-link" description="Thiazole-4-carboxylic acid (Thr-Cys)">
    <location>
        <begin position="8"/>
        <end position="9"/>
    </location>
</feature>
<feature type="cross-link" description="Thiazole-4-carboxylic acid (Ser-Cys)">
    <location>
        <begin position="10"/>
        <end position="11"/>
    </location>
</feature>
<feature type="cross-link" description="Thiazole-4-carboxylic acid (Cys-Cys)">
    <location>
        <begin position="11"/>
        <end position="12"/>
    </location>
</feature>
<protein>
    <recommendedName>
        <fullName>Thiocillin</fullName>
    </recommendedName>
</protein>
<name>THCL_BACBA</name>
<proteinExistence type="evidence at protein level"/>
<accession>P0C8P7</accession>
<organism>
    <name type="scientific">Bacillus badius</name>
    <dbReference type="NCBI Taxonomy" id="1455"/>
    <lineage>
        <taxon>Bacteria</taxon>
        <taxon>Bacillati</taxon>
        <taxon>Bacillota</taxon>
        <taxon>Bacilli</taxon>
        <taxon>Bacillales</taxon>
        <taxon>Bacillaceae</taxon>
        <taxon>Pseudobacillus</taxon>
    </lineage>
</organism>
<comment type="function">
    <text>Has bacteriocidal activity against Gram-positive bacteria, but not against Gram-negative bacteria. Inhibits bacterial protein biosynthesis by acting on the elongation factor Tu (EF-Tu).</text>
</comment>
<comment type="subcellular location">
    <subcellularLocation>
        <location evidence="3">Secreted</location>
    </subcellularLocation>
</comment>
<comment type="PTM">
    <text>Maturation of thiazole and oxazole containing antibiotics involves the enzymatic condensation of a Cys, Ser or Thr with the alpha-carbonyl of the preceding amino acid to form a thioether or ether bond, then dehydration to form a double bond with the alpha-amino nitrogen. Thiazoline or oxazoline ring are dehydrogenated to form thiazole or oxazole rings.</text>
</comment>
<comment type="PTM">
    <text>Maturation of pyridinyl containing antibiotics involves the cross-linking of a Ser and a Cys-Ser pair usually separated by 7 or 8 residues along the peptide chain. The Ser residues are dehydrated to didehydroalanines, then bonded between their beta carbons. The alpha carbonyl of the Cys condenses with alpha carbon of the first Ser to form a pyridinyl ring. The ring may be multiply dehydrogenated to form a pyridine ring with loss of the amino nitrogen of the first Ser.</text>
</comment>
<comment type="PTM">
    <text>3 isomers may exist: thiocillin I, identified in B.cereus G-15, thiocillin II, identified in both B.badius and B.cereus G-15, and thiocillin III identified in B.badius only. The structural differences between them lie in the extent of the modifications at two positions, as shown in the feature table.</text>
</comment>
<comment type="PTM">
    <text>The structure of the 2,3-didehydrobutyrines is not discussed in PubMed:7328054. However, in Fig. 1 the residues are diagrammed as Z-isomers.</text>
</comment>
<comment type="similarity">
    <text evidence="4">Belongs to the thiocillin family.</text>
</comment>